<evidence type="ECO:0000305" key="1"/>
<sequence>MSDLDIQIPTAFDPFAEANAGDSGAAAGSKDYVHVRIQQRNGRKSLTTVQGLKKEFSYNKILKDLKKEFCCNGTVVQDPELGQVIQLQGDQRKNVSNFLVQAGIVKKEHIKIHGF</sequence>
<gene>
    <name type="primary">GOS2</name>
    <name type="ORF">OsI_025373</name>
</gene>
<protein>
    <recommendedName>
        <fullName>Protein translation factor SUI1 homolog</fullName>
    </recommendedName>
    <alternativeName>
        <fullName>Protein GOS2</fullName>
    </alternativeName>
    <alternativeName>
        <fullName>Protein eIF1</fullName>
    </alternativeName>
    <alternativeName>
        <fullName>Translation initiation factor 1</fullName>
    </alternativeName>
</protein>
<name>SUI1_ORYSI</name>
<organism>
    <name type="scientific">Oryza sativa subsp. indica</name>
    <name type="common">Rice</name>
    <dbReference type="NCBI Taxonomy" id="39946"/>
    <lineage>
        <taxon>Eukaryota</taxon>
        <taxon>Viridiplantae</taxon>
        <taxon>Streptophyta</taxon>
        <taxon>Embryophyta</taxon>
        <taxon>Tracheophyta</taxon>
        <taxon>Spermatophyta</taxon>
        <taxon>Magnoliopsida</taxon>
        <taxon>Liliopsida</taxon>
        <taxon>Poales</taxon>
        <taxon>Poaceae</taxon>
        <taxon>BOP clade</taxon>
        <taxon>Oryzoideae</taxon>
        <taxon>Oryzeae</taxon>
        <taxon>Oryzinae</taxon>
        <taxon>Oryza</taxon>
        <taxon>Oryza sativa</taxon>
    </lineage>
</organism>
<dbReference type="EMBL" id="X51910">
    <property type="protein sequence ID" value="CAA36190.1"/>
    <property type="molecule type" value="Genomic_DNA"/>
</dbReference>
<dbReference type="EMBL" id="CM000132">
    <property type="status" value="NOT_ANNOTATED_CDS"/>
    <property type="molecule type" value="Genomic_DNA"/>
</dbReference>
<dbReference type="EMBL" id="EF575854">
    <property type="protein sequence ID" value="ABR25442.1"/>
    <property type="molecule type" value="mRNA"/>
</dbReference>
<dbReference type="EMBL" id="EF576529">
    <property type="protein sequence ID" value="ABR26117.1"/>
    <property type="molecule type" value="mRNA"/>
</dbReference>
<dbReference type="PIR" id="S21636">
    <property type="entry name" value="S21636"/>
</dbReference>
<dbReference type="SMR" id="A6MZM2"/>
<dbReference type="STRING" id="39946.A6MZM2"/>
<dbReference type="EnsemblPlants" id="OsGoSa_07g0017300.02">
    <property type="protein sequence ID" value="OsGoSa_07g0017300.02"/>
    <property type="gene ID" value="OsGoSa_07g0017300"/>
</dbReference>
<dbReference type="EnsemblPlants" id="OsIR64_07g0017910.01">
    <property type="protein sequence ID" value="OsIR64_07g0017910.01"/>
    <property type="gene ID" value="OsIR64_07g0017910"/>
</dbReference>
<dbReference type="EnsemblPlants" id="OsKYG_07g0017330.01">
    <property type="protein sequence ID" value="OsKYG_07g0017330.01"/>
    <property type="gene ID" value="OsKYG_07g0017330"/>
</dbReference>
<dbReference type="EnsemblPlants" id="OsLima_07g0017140.01">
    <property type="protein sequence ID" value="OsLima_07g0017140.01"/>
    <property type="gene ID" value="OsLima_07g0017140"/>
</dbReference>
<dbReference type="EnsemblPlants" id="OsLima_07g0017140.04">
    <property type="protein sequence ID" value="OsLima_07g0017140.04"/>
    <property type="gene ID" value="OsLima_07g0017140"/>
</dbReference>
<dbReference type="EnsemblPlants" id="OsLiXu_07g0017560.01">
    <property type="protein sequence ID" value="OsLiXu_07g0017560.01"/>
    <property type="gene ID" value="OsLiXu_07g0017560"/>
</dbReference>
<dbReference type="EnsemblPlants" id="OsMH63_07G017210_02">
    <property type="protein sequence ID" value="OsMH63_07G017210_02"/>
    <property type="gene ID" value="OsMH63_07G017210"/>
</dbReference>
<dbReference type="EnsemblPlants" id="OsPr106_07g0017410.03">
    <property type="protein sequence ID" value="OsPr106_07g0017410.03"/>
    <property type="gene ID" value="OsPr106_07g0017410"/>
</dbReference>
<dbReference type="EnsemblPlants" id="OsPr106_07g0017410.04">
    <property type="protein sequence ID" value="OsPr106_07g0017410.04"/>
    <property type="gene ID" value="OsPr106_07g0017410"/>
</dbReference>
<dbReference type="EnsemblPlants" id="OsZS97_07G017240_02">
    <property type="protein sequence ID" value="OsZS97_07G017240_02"/>
    <property type="gene ID" value="OsZS97_07G017240"/>
</dbReference>
<dbReference type="Gramene" id="OsGoSa_07g0017300.02">
    <property type="protein sequence ID" value="OsGoSa_07g0017300.02"/>
    <property type="gene ID" value="OsGoSa_07g0017300"/>
</dbReference>
<dbReference type="Gramene" id="OsIR64_07g0017910.01">
    <property type="protein sequence ID" value="OsIR64_07g0017910.01"/>
    <property type="gene ID" value="OsIR64_07g0017910"/>
</dbReference>
<dbReference type="Gramene" id="OsKYG_07g0017330.01">
    <property type="protein sequence ID" value="OsKYG_07g0017330.01"/>
    <property type="gene ID" value="OsKYG_07g0017330"/>
</dbReference>
<dbReference type="Gramene" id="OsLima_07g0017140.01">
    <property type="protein sequence ID" value="OsLima_07g0017140.01"/>
    <property type="gene ID" value="OsLima_07g0017140"/>
</dbReference>
<dbReference type="Gramene" id="OsLima_07g0017140.04">
    <property type="protein sequence ID" value="OsLima_07g0017140.04"/>
    <property type="gene ID" value="OsLima_07g0017140"/>
</dbReference>
<dbReference type="Gramene" id="OsLiXu_07g0017560.01">
    <property type="protein sequence ID" value="OsLiXu_07g0017560.01"/>
    <property type="gene ID" value="OsLiXu_07g0017560"/>
</dbReference>
<dbReference type="Gramene" id="OsMH63_07G017210_02">
    <property type="protein sequence ID" value="OsMH63_07G017210_02"/>
    <property type="gene ID" value="OsMH63_07G017210"/>
</dbReference>
<dbReference type="Gramene" id="OsPr106_07g0017410.03">
    <property type="protein sequence ID" value="OsPr106_07g0017410.03"/>
    <property type="gene ID" value="OsPr106_07g0017410"/>
</dbReference>
<dbReference type="Gramene" id="OsPr106_07g0017410.04">
    <property type="protein sequence ID" value="OsPr106_07g0017410.04"/>
    <property type="gene ID" value="OsPr106_07g0017410"/>
</dbReference>
<dbReference type="Gramene" id="OsZS97_07G017240_02">
    <property type="protein sequence ID" value="OsZS97_07G017240_02"/>
    <property type="gene ID" value="OsZS97_07G017240"/>
</dbReference>
<dbReference type="OrthoDB" id="10248435at2759"/>
<dbReference type="Proteomes" id="UP000007015">
    <property type="component" value="Chromosome 7"/>
</dbReference>
<dbReference type="GO" id="GO:0003743">
    <property type="term" value="F:translation initiation factor activity"/>
    <property type="evidence" value="ECO:0007669"/>
    <property type="project" value="UniProtKB-KW"/>
</dbReference>
<dbReference type="GO" id="GO:0006417">
    <property type="term" value="P:regulation of translation"/>
    <property type="evidence" value="ECO:0007669"/>
    <property type="project" value="UniProtKB-KW"/>
</dbReference>
<dbReference type="CDD" id="cd11566">
    <property type="entry name" value="eIF1_SUI1"/>
    <property type="match status" value="1"/>
</dbReference>
<dbReference type="FunFam" id="3.30.780.10:FF:000001">
    <property type="entry name" value="Eukaryotic translation initiation factor SUI1"/>
    <property type="match status" value="1"/>
</dbReference>
<dbReference type="Gene3D" id="3.30.780.10">
    <property type="entry name" value="SUI1-like domain"/>
    <property type="match status" value="1"/>
</dbReference>
<dbReference type="InterPro" id="IPR001950">
    <property type="entry name" value="SUI1"/>
</dbReference>
<dbReference type="InterPro" id="IPR036877">
    <property type="entry name" value="SUI1_dom_sf"/>
</dbReference>
<dbReference type="InterPro" id="IPR005874">
    <property type="entry name" value="SUI1_euk"/>
</dbReference>
<dbReference type="NCBIfam" id="TIGR01160">
    <property type="entry name" value="SUI1_MOF2"/>
    <property type="match status" value="1"/>
</dbReference>
<dbReference type="PANTHER" id="PTHR10388">
    <property type="entry name" value="EUKARYOTIC TRANSLATION INITIATION FACTOR SUI1"/>
    <property type="match status" value="1"/>
</dbReference>
<dbReference type="Pfam" id="PF01253">
    <property type="entry name" value="SUI1"/>
    <property type="match status" value="1"/>
</dbReference>
<dbReference type="PIRSF" id="PIRSF004499">
    <property type="entry name" value="SUI1_euk"/>
    <property type="match status" value="1"/>
</dbReference>
<dbReference type="SUPFAM" id="SSF55159">
    <property type="entry name" value="eIF1-like"/>
    <property type="match status" value="1"/>
</dbReference>
<dbReference type="PROSITE" id="PS50296">
    <property type="entry name" value="SUI1"/>
    <property type="match status" value="1"/>
</dbReference>
<comment type="function">
    <text>Probably involved in translation.</text>
</comment>
<comment type="tissue specificity">
    <text>Expressed in all tissues examined.</text>
</comment>
<comment type="similarity">
    <text evidence="1">Belongs to the SUI1 family.</text>
</comment>
<proteinExistence type="evidence at transcript level"/>
<feature type="chain" id="PRO_0000303663" description="Protein translation factor SUI1 homolog">
    <location>
        <begin position="1"/>
        <end position="115"/>
    </location>
</feature>
<accession>A6MZM2</accession>
<accession>A2YM30</accession>
<accession>P33278</accession>
<accession>Q7EZD6</accession>
<keyword id="KW-0396">Initiation factor</keyword>
<keyword id="KW-0648">Protein biosynthesis</keyword>
<keyword id="KW-1185">Reference proteome</keyword>
<keyword id="KW-0810">Translation regulation</keyword>
<reference key="1">
    <citation type="journal article" date="1992" name="Plant J.">
        <title>The promoter of the rice gene GOS2 is active in various different monocot tissues and binds rice nuclear factor ASF-1.</title>
        <authorList>
            <person name="de Pater B.S."/>
            <person name="van der Mark F."/>
            <person name="Rueb S."/>
            <person name="Katagiri F."/>
            <person name="Chua N.-H."/>
            <person name="Schilperoot R.A."/>
            <person name="Hensgens L.A.M."/>
        </authorList>
    </citation>
    <scope>NUCLEOTIDE SEQUENCE [GENOMIC DNA]</scope>
    <source>
        <strain>cv. IR36</strain>
    </source>
</reference>
<reference key="2">
    <citation type="journal article" date="2005" name="PLoS Biol.">
        <title>The genomes of Oryza sativa: a history of duplications.</title>
        <authorList>
            <person name="Yu J."/>
            <person name="Wang J."/>
            <person name="Lin W."/>
            <person name="Li S."/>
            <person name="Li H."/>
            <person name="Zhou J."/>
            <person name="Ni P."/>
            <person name="Dong W."/>
            <person name="Hu S."/>
            <person name="Zeng C."/>
            <person name="Zhang J."/>
            <person name="Zhang Y."/>
            <person name="Li R."/>
            <person name="Xu Z."/>
            <person name="Li S."/>
            <person name="Li X."/>
            <person name="Zheng H."/>
            <person name="Cong L."/>
            <person name="Lin L."/>
            <person name="Yin J."/>
            <person name="Geng J."/>
            <person name="Li G."/>
            <person name="Shi J."/>
            <person name="Liu J."/>
            <person name="Lv H."/>
            <person name="Li J."/>
            <person name="Wang J."/>
            <person name="Deng Y."/>
            <person name="Ran L."/>
            <person name="Shi X."/>
            <person name="Wang X."/>
            <person name="Wu Q."/>
            <person name="Li C."/>
            <person name="Ren X."/>
            <person name="Wang J."/>
            <person name="Wang X."/>
            <person name="Li D."/>
            <person name="Liu D."/>
            <person name="Zhang X."/>
            <person name="Ji Z."/>
            <person name="Zhao W."/>
            <person name="Sun Y."/>
            <person name="Zhang Z."/>
            <person name="Bao J."/>
            <person name="Han Y."/>
            <person name="Dong L."/>
            <person name="Ji J."/>
            <person name="Chen P."/>
            <person name="Wu S."/>
            <person name="Liu J."/>
            <person name="Xiao Y."/>
            <person name="Bu D."/>
            <person name="Tan J."/>
            <person name="Yang L."/>
            <person name="Ye C."/>
            <person name="Zhang J."/>
            <person name="Xu J."/>
            <person name="Zhou Y."/>
            <person name="Yu Y."/>
            <person name="Zhang B."/>
            <person name="Zhuang S."/>
            <person name="Wei H."/>
            <person name="Liu B."/>
            <person name="Lei M."/>
            <person name="Yu H."/>
            <person name="Li Y."/>
            <person name="Xu H."/>
            <person name="Wei S."/>
            <person name="He X."/>
            <person name="Fang L."/>
            <person name="Zhang Z."/>
            <person name="Zhang Y."/>
            <person name="Huang X."/>
            <person name="Su Z."/>
            <person name="Tong W."/>
            <person name="Li J."/>
            <person name="Tong Z."/>
            <person name="Li S."/>
            <person name="Ye J."/>
            <person name="Wang L."/>
            <person name="Fang L."/>
            <person name="Lei T."/>
            <person name="Chen C.-S."/>
            <person name="Chen H.-C."/>
            <person name="Xu Z."/>
            <person name="Li H."/>
            <person name="Huang H."/>
            <person name="Zhang F."/>
            <person name="Xu H."/>
            <person name="Li N."/>
            <person name="Zhao C."/>
            <person name="Li S."/>
            <person name="Dong L."/>
            <person name="Huang Y."/>
            <person name="Li L."/>
            <person name="Xi Y."/>
            <person name="Qi Q."/>
            <person name="Li W."/>
            <person name="Zhang B."/>
            <person name="Hu W."/>
            <person name="Zhang Y."/>
            <person name="Tian X."/>
            <person name="Jiao Y."/>
            <person name="Liang X."/>
            <person name="Jin J."/>
            <person name="Gao L."/>
            <person name="Zheng W."/>
            <person name="Hao B."/>
            <person name="Liu S.-M."/>
            <person name="Wang W."/>
            <person name="Yuan L."/>
            <person name="Cao M."/>
            <person name="McDermott J."/>
            <person name="Samudrala R."/>
            <person name="Wang J."/>
            <person name="Wong G.K.-S."/>
            <person name="Yang H."/>
        </authorList>
    </citation>
    <scope>NUCLEOTIDE SEQUENCE [LARGE SCALE GENOMIC DNA]</scope>
    <source>
        <strain>cv. 93-11</strain>
    </source>
</reference>
<reference key="3">
    <citation type="submission" date="2007-04" db="EMBL/GenBank/DDBJ databases">
        <title>A comparative transcriptome map of early and late salinity stress responses in contrasting genotypes of Oryza sativa L.</title>
        <authorList>
            <person name="Kumari S."/>
            <person name="Panjabi V."/>
            <person name="Singla-Pareek S.L."/>
            <person name="Sopory S.K."/>
            <person name="Pareek A."/>
        </authorList>
    </citation>
    <scope>NUCLEOTIDE SEQUENCE [LARGE SCALE MRNA]</scope>
    <source>
        <tissue>Shoot</tissue>
    </source>
</reference>